<keyword id="KW-0025">Alternative splicing</keyword>
<keyword id="KW-0472">Membrane</keyword>
<keyword id="KW-0576">Peroxisome</keyword>
<keyword id="KW-0962">Peroxisome biogenesis</keyword>
<keyword id="KW-1267">Proteomics identification</keyword>
<keyword id="KW-1185">Reference proteome</keyword>
<keyword id="KW-0812">Transmembrane</keyword>
<keyword id="KW-1133">Transmembrane helix</keyword>
<organism>
    <name type="scientific">Homo sapiens</name>
    <name type="common">Human</name>
    <dbReference type="NCBI Taxonomy" id="9606"/>
    <lineage>
        <taxon>Eukaryota</taxon>
        <taxon>Metazoa</taxon>
        <taxon>Chordata</taxon>
        <taxon>Craniata</taxon>
        <taxon>Vertebrata</taxon>
        <taxon>Euteleostomi</taxon>
        <taxon>Mammalia</taxon>
        <taxon>Eutheria</taxon>
        <taxon>Euarchontoglires</taxon>
        <taxon>Primates</taxon>
        <taxon>Haplorrhini</taxon>
        <taxon>Catarrhini</taxon>
        <taxon>Hominidae</taxon>
        <taxon>Homo</taxon>
    </lineage>
</organism>
<accession>O75192</accession>
<accession>B4DV88</accession>
<dbReference type="EMBL" id="AB015594">
    <property type="protein sequence ID" value="BAA32533.1"/>
    <property type="molecule type" value="mRNA"/>
</dbReference>
<dbReference type="EMBL" id="AF093668">
    <property type="protein sequence ID" value="AAC78658.1"/>
    <property type="molecule type" value="mRNA"/>
</dbReference>
<dbReference type="EMBL" id="CR542046">
    <property type="protein sequence ID" value="CAG46843.1"/>
    <property type="molecule type" value="mRNA"/>
</dbReference>
<dbReference type="EMBL" id="CR542075">
    <property type="protein sequence ID" value="CAG46872.1"/>
    <property type="molecule type" value="mRNA"/>
</dbReference>
<dbReference type="EMBL" id="AK300978">
    <property type="protein sequence ID" value="BAG62600.1"/>
    <property type="molecule type" value="mRNA"/>
</dbReference>
<dbReference type="EMBL" id="AC013787">
    <property type="status" value="NOT_ANNOTATED_CDS"/>
    <property type="molecule type" value="Genomic_DNA"/>
</dbReference>
<dbReference type="EMBL" id="BC009697">
    <property type="protein sequence ID" value="AAH09697.1"/>
    <property type="molecule type" value="mRNA"/>
</dbReference>
<dbReference type="CCDS" id="CCDS10354.1">
    <molecule id="O75192-1"/>
</dbReference>
<dbReference type="CCDS" id="CCDS61751.1">
    <molecule id="O75192-2"/>
</dbReference>
<dbReference type="RefSeq" id="NP_001258501.1">
    <molecule id="O75192-2"/>
    <property type="nucleotide sequence ID" value="NM_001271572.2"/>
</dbReference>
<dbReference type="RefSeq" id="NP_003838.1">
    <molecule id="O75192-1"/>
    <property type="nucleotide sequence ID" value="NM_003847.3"/>
</dbReference>
<dbReference type="BioGRID" id="114328">
    <property type="interactions" value="17"/>
</dbReference>
<dbReference type="FunCoup" id="O75192">
    <property type="interactions" value="185"/>
</dbReference>
<dbReference type="IntAct" id="O75192">
    <property type="interactions" value="5"/>
</dbReference>
<dbReference type="STRING" id="9606.ENSP00000300056"/>
<dbReference type="TCDB" id="1.A.101.1.2">
    <property type="family name" value="the peroxisomal pore-forming pex11 (pex11) family"/>
</dbReference>
<dbReference type="GlyGen" id="O75192">
    <property type="glycosylation" value="1 site, 1 O-linked glycan (1 site)"/>
</dbReference>
<dbReference type="iPTMnet" id="O75192"/>
<dbReference type="PhosphoSitePlus" id="O75192"/>
<dbReference type="BioMuta" id="PEX11A"/>
<dbReference type="jPOST" id="O75192"/>
<dbReference type="MassIVE" id="O75192"/>
<dbReference type="PaxDb" id="9606-ENSP00000300056"/>
<dbReference type="PeptideAtlas" id="O75192"/>
<dbReference type="ProteomicsDB" id="49864">
    <molecule id="O75192-1"/>
</dbReference>
<dbReference type="ProteomicsDB" id="5253"/>
<dbReference type="Pumba" id="O75192"/>
<dbReference type="Antibodypedia" id="28643">
    <property type="antibodies" value="158 antibodies from 25 providers"/>
</dbReference>
<dbReference type="DNASU" id="8800"/>
<dbReference type="Ensembl" id="ENST00000300056.8">
    <molecule id="O75192-1"/>
    <property type="protein sequence ID" value="ENSP00000300056.3"/>
    <property type="gene ID" value="ENSG00000166821.9"/>
</dbReference>
<dbReference type="Ensembl" id="ENST00000561257.1">
    <molecule id="O75192-2"/>
    <property type="protein sequence ID" value="ENSP00000453492.1"/>
    <property type="gene ID" value="ENSG00000166821.9"/>
</dbReference>
<dbReference type="GeneID" id="8800"/>
<dbReference type="KEGG" id="hsa:8800"/>
<dbReference type="MANE-Select" id="ENST00000300056.8">
    <property type="protein sequence ID" value="ENSP00000300056.3"/>
    <property type="RefSeq nucleotide sequence ID" value="NM_003847.3"/>
    <property type="RefSeq protein sequence ID" value="NP_003838.1"/>
</dbReference>
<dbReference type="UCSC" id="uc002boi.5">
    <molecule id="O75192-1"/>
    <property type="organism name" value="human"/>
</dbReference>
<dbReference type="AGR" id="HGNC:8852"/>
<dbReference type="CTD" id="8800"/>
<dbReference type="DisGeNET" id="8800"/>
<dbReference type="GeneCards" id="PEX11A"/>
<dbReference type="HGNC" id="HGNC:8852">
    <property type="gene designation" value="PEX11A"/>
</dbReference>
<dbReference type="HPA" id="ENSG00000166821">
    <property type="expression patterns" value="Low tissue specificity"/>
</dbReference>
<dbReference type="MIM" id="603866">
    <property type="type" value="gene"/>
</dbReference>
<dbReference type="neXtProt" id="NX_O75192"/>
<dbReference type="OpenTargets" id="ENSG00000166821"/>
<dbReference type="PharmGKB" id="PA33194"/>
<dbReference type="VEuPathDB" id="HostDB:ENSG00000166821"/>
<dbReference type="eggNOG" id="KOG4186">
    <property type="taxonomic scope" value="Eukaryota"/>
</dbReference>
<dbReference type="GeneTree" id="ENSGT00390000014273"/>
<dbReference type="HOGENOM" id="CLU_049216_2_0_1"/>
<dbReference type="InParanoid" id="O75192"/>
<dbReference type="OMA" id="AKRTMQL"/>
<dbReference type="OrthoDB" id="411017at2759"/>
<dbReference type="PAN-GO" id="O75192">
    <property type="GO annotations" value="3 GO annotations based on evolutionary models"/>
</dbReference>
<dbReference type="PhylomeDB" id="O75192"/>
<dbReference type="TreeFam" id="TF325704"/>
<dbReference type="PathwayCommons" id="O75192"/>
<dbReference type="Reactome" id="R-HSA-1989781">
    <property type="pathway name" value="PPARA activates gene expression"/>
</dbReference>
<dbReference type="Reactome" id="R-HSA-9841922">
    <property type="pathway name" value="MLL4 and MLL3 complexes regulate expression of PPARG target genes in adipogenesis and hepatic steatosis"/>
</dbReference>
<dbReference type="SignaLink" id="O75192"/>
<dbReference type="BioGRID-ORCS" id="8800">
    <property type="hits" value="10 hits in 1149 CRISPR screens"/>
</dbReference>
<dbReference type="GeneWiki" id="PEX11A"/>
<dbReference type="GenomeRNAi" id="8800"/>
<dbReference type="Pharos" id="O75192">
    <property type="development level" value="Tbio"/>
</dbReference>
<dbReference type="PRO" id="PR:O75192"/>
<dbReference type="Proteomes" id="UP000005640">
    <property type="component" value="Chromosome 15"/>
</dbReference>
<dbReference type="RNAct" id="O75192">
    <property type="molecule type" value="protein"/>
</dbReference>
<dbReference type="Bgee" id="ENSG00000166821">
    <property type="expression patterns" value="Expressed in jejunal mucosa and 187 other cell types or tissues"/>
</dbReference>
<dbReference type="ExpressionAtlas" id="O75192">
    <property type="expression patterns" value="baseline and differential"/>
</dbReference>
<dbReference type="GO" id="GO:0005778">
    <property type="term" value="C:peroxisomal membrane"/>
    <property type="evidence" value="ECO:0000314"/>
    <property type="project" value="UniProtKB"/>
</dbReference>
<dbReference type="GO" id="GO:0005777">
    <property type="term" value="C:peroxisome"/>
    <property type="evidence" value="ECO:0000314"/>
    <property type="project" value="UniProtKB"/>
</dbReference>
<dbReference type="GO" id="GO:0032991">
    <property type="term" value="C:protein-containing complex"/>
    <property type="evidence" value="ECO:0000314"/>
    <property type="project" value="UniProtKB"/>
</dbReference>
<dbReference type="GO" id="GO:0042803">
    <property type="term" value="F:protein homodimerization activity"/>
    <property type="evidence" value="ECO:0000314"/>
    <property type="project" value="UniProtKB"/>
</dbReference>
<dbReference type="GO" id="GO:0050873">
    <property type="term" value="P:brown fat cell differentiation"/>
    <property type="evidence" value="ECO:0007669"/>
    <property type="project" value="Ensembl"/>
</dbReference>
<dbReference type="GO" id="GO:0016559">
    <property type="term" value="P:peroxisome fission"/>
    <property type="evidence" value="ECO:0000314"/>
    <property type="project" value="UniProtKB"/>
</dbReference>
<dbReference type="GO" id="GO:0016557">
    <property type="term" value="P:peroxisome membrane biogenesis"/>
    <property type="evidence" value="ECO:0007669"/>
    <property type="project" value="Ensembl"/>
</dbReference>
<dbReference type="GO" id="GO:0007031">
    <property type="term" value="P:peroxisome organization"/>
    <property type="evidence" value="ECO:0000315"/>
    <property type="project" value="UniProtKB"/>
</dbReference>
<dbReference type="GO" id="GO:0044375">
    <property type="term" value="P:regulation of peroxisome size"/>
    <property type="evidence" value="ECO:0000314"/>
    <property type="project" value="UniProtKB"/>
</dbReference>
<dbReference type="GO" id="GO:0007165">
    <property type="term" value="P:signal transduction"/>
    <property type="evidence" value="ECO:0000315"/>
    <property type="project" value="UniProtKB"/>
</dbReference>
<dbReference type="InterPro" id="IPR008733">
    <property type="entry name" value="PEX11"/>
</dbReference>
<dbReference type="PANTHER" id="PTHR12652">
    <property type="entry name" value="PEROXISOMAL BIOGENESIS FACTOR 11"/>
    <property type="match status" value="1"/>
</dbReference>
<dbReference type="PANTHER" id="PTHR12652:SF22">
    <property type="entry name" value="PEROXISOMAL MEMBRANE PROTEIN 11A"/>
    <property type="match status" value="1"/>
</dbReference>
<dbReference type="Pfam" id="PF05648">
    <property type="entry name" value="PEX11"/>
    <property type="match status" value="1"/>
</dbReference>
<proteinExistence type="evidence at protein level"/>
<sequence length="247" mass="28353">MDAFTRFTNQTQGRDRLFRATQYTCMLLRYLLEPKAGKEKVVMKLKKLESSVSTGRKWFRLGNVVHAIQATEQSIHATDLVPRLCLTLANLNRVIYFICDTILWVRSVGLTSGINKEKWRTRAAHHYYYSLLLSLVRDLYEISLQMKRVTCDRAKKEKSASQDPLWFSVAEEETEWLQSFLLLLFRSLKQHPPLLLDTVKNLCDILNPLDQLGIYKSNPGIIGLGGLVSSIAGMITVAYPQMKLKTR</sequence>
<protein>
    <recommendedName>
        <fullName>Peroxisomal membrane protein 11A</fullName>
        <shortName>HsPEX11p</shortName>
    </recommendedName>
    <alternativeName>
        <fullName>28 kDa peroxisomal integral membrane protein</fullName>
        <shortName>PMP28</shortName>
    </alternativeName>
    <alternativeName>
        <fullName>Peroxin-11A</fullName>
    </alternativeName>
    <alternativeName>
        <fullName>Peroxisomal biogenesis factor 11A</fullName>
    </alternativeName>
    <alternativeName>
        <fullName>Protein PEX11 homolog alpha</fullName>
        <shortName>PEX11-alpha</shortName>
    </alternativeName>
</protein>
<gene>
    <name type="primary">PEX11A</name>
    <name type="synonym">PEX11</name>
</gene>
<reference key="1">
    <citation type="journal article" date="1998" name="FEBS Lett.">
        <title>Clofibrate-inducible, 28-kDa peroxisomal integral membrane protein is encoded by PEX11.</title>
        <authorList>
            <person name="Abe I."/>
            <person name="Okumoto K."/>
            <person name="Tamura S."/>
            <person name="Fujiki Y."/>
        </authorList>
    </citation>
    <scope>NUCLEOTIDE SEQUENCE [MRNA] (ISOFORM 1)</scope>
    <scope>SUBCELLULAR LOCATION</scope>
    <scope>MUTAGENESIS OF ASN-9 AND 243-LYS--LYS-245</scope>
    <scope>TOPOLOGY</scope>
    <source>
        <tissue>Liver</tissue>
    </source>
</reference>
<reference key="2">
    <citation type="journal article" date="1998" name="J. Biol. Chem.">
        <title>Expression of PEX11beta mediates peroxisome proliferation in the absence of extracellular stimuli.</title>
        <authorList>
            <person name="Schrader M."/>
            <person name="Reuber B.E."/>
            <person name="Morrell J.C."/>
            <person name="Jimenez-Sanchez G."/>
            <person name="Obie C."/>
            <person name="Stroh T.A."/>
            <person name="Valle D."/>
            <person name="Schroer T.A."/>
            <person name="Gould S.J."/>
        </authorList>
    </citation>
    <scope>NUCLEOTIDE SEQUENCE [MRNA] (ISOFORM 1)</scope>
    <scope>SUBCELLULAR LOCATION</scope>
    <scope>FUNCTION</scope>
</reference>
<reference key="3">
    <citation type="submission" date="2004-06" db="EMBL/GenBank/DDBJ databases">
        <title>Cloning of human full open reading frames in Gateway(TM) system entry vector (pDONR201).</title>
        <authorList>
            <person name="Halleck A."/>
            <person name="Ebert L."/>
            <person name="Mkoundinya M."/>
            <person name="Schick M."/>
            <person name="Eisenstein S."/>
            <person name="Neubert P."/>
            <person name="Kstrang K."/>
            <person name="Schatten R."/>
            <person name="Shen B."/>
            <person name="Henze S."/>
            <person name="Mar W."/>
            <person name="Korn B."/>
            <person name="Zuo D."/>
            <person name="Hu Y."/>
            <person name="LaBaer J."/>
        </authorList>
    </citation>
    <scope>NUCLEOTIDE SEQUENCE [LARGE SCALE MRNA] (ISOFORM 1)</scope>
</reference>
<reference key="4">
    <citation type="journal article" date="2004" name="Nat. Genet.">
        <title>Complete sequencing and characterization of 21,243 full-length human cDNAs.</title>
        <authorList>
            <person name="Ota T."/>
            <person name="Suzuki Y."/>
            <person name="Nishikawa T."/>
            <person name="Otsuki T."/>
            <person name="Sugiyama T."/>
            <person name="Irie R."/>
            <person name="Wakamatsu A."/>
            <person name="Hayashi K."/>
            <person name="Sato H."/>
            <person name="Nagai K."/>
            <person name="Kimura K."/>
            <person name="Makita H."/>
            <person name="Sekine M."/>
            <person name="Obayashi M."/>
            <person name="Nishi T."/>
            <person name="Shibahara T."/>
            <person name="Tanaka T."/>
            <person name="Ishii S."/>
            <person name="Yamamoto J."/>
            <person name="Saito K."/>
            <person name="Kawai Y."/>
            <person name="Isono Y."/>
            <person name="Nakamura Y."/>
            <person name="Nagahari K."/>
            <person name="Murakami K."/>
            <person name="Yasuda T."/>
            <person name="Iwayanagi T."/>
            <person name="Wagatsuma M."/>
            <person name="Shiratori A."/>
            <person name="Sudo H."/>
            <person name="Hosoiri T."/>
            <person name="Kaku Y."/>
            <person name="Kodaira H."/>
            <person name="Kondo H."/>
            <person name="Sugawara M."/>
            <person name="Takahashi M."/>
            <person name="Kanda K."/>
            <person name="Yokoi T."/>
            <person name="Furuya T."/>
            <person name="Kikkawa E."/>
            <person name="Omura Y."/>
            <person name="Abe K."/>
            <person name="Kamihara K."/>
            <person name="Katsuta N."/>
            <person name="Sato K."/>
            <person name="Tanikawa M."/>
            <person name="Yamazaki M."/>
            <person name="Ninomiya K."/>
            <person name="Ishibashi T."/>
            <person name="Yamashita H."/>
            <person name="Murakawa K."/>
            <person name="Fujimori K."/>
            <person name="Tanai H."/>
            <person name="Kimata M."/>
            <person name="Watanabe M."/>
            <person name="Hiraoka S."/>
            <person name="Chiba Y."/>
            <person name="Ishida S."/>
            <person name="Ono Y."/>
            <person name="Takiguchi S."/>
            <person name="Watanabe S."/>
            <person name="Yosida M."/>
            <person name="Hotuta T."/>
            <person name="Kusano J."/>
            <person name="Kanehori K."/>
            <person name="Takahashi-Fujii A."/>
            <person name="Hara H."/>
            <person name="Tanase T.-O."/>
            <person name="Nomura Y."/>
            <person name="Togiya S."/>
            <person name="Komai F."/>
            <person name="Hara R."/>
            <person name="Takeuchi K."/>
            <person name="Arita M."/>
            <person name="Imose N."/>
            <person name="Musashino K."/>
            <person name="Yuuki H."/>
            <person name="Oshima A."/>
            <person name="Sasaki N."/>
            <person name="Aotsuka S."/>
            <person name="Yoshikawa Y."/>
            <person name="Matsunawa H."/>
            <person name="Ichihara T."/>
            <person name="Shiohata N."/>
            <person name="Sano S."/>
            <person name="Moriya S."/>
            <person name="Momiyama H."/>
            <person name="Satoh N."/>
            <person name="Takami S."/>
            <person name="Terashima Y."/>
            <person name="Suzuki O."/>
            <person name="Nakagawa S."/>
            <person name="Senoh A."/>
            <person name="Mizoguchi H."/>
            <person name="Goto Y."/>
            <person name="Shimizu F."/>
            <person name="Wakebe H."/>
            <person name="Hishigaki H."/>
            <person name="Watanabe T."/>
            <person name="Sugiyama A."/>
            <person name="Takemoto M."/>
            <person name="Kawakami B."/>
            <person name="Yamazaki M."/>
            <person name="Watanabe K."/>
            <person name="Kumagai A."/>
            <person name="Itakura S."/>
            <person name="Fukuzumi Y."/>
            <person name="Fujimori Y."/>
            <person name="Komiyama M."/>
            <person name="Tashiro H."/>
            <person name="Tanigami A."/>
            <person name="Fujiwara T."/>
            <person name="Ono T."/>
            <person name="Yamada K."/>
            <person name="Fujii Y."/>
            <person name="Ozaki K."/>
            <person name="Hirao M."/>
            <person name="Ohmori Y."/>
            <person name="Kawabata A."/>
            <person name="Hikiji T."/>
            <person name="Kobatake N."/>
            <person name="Inagaki H."/>
            <person name="Ikema Y."/>
            <person name="Okamoto S."/>
            <person name="Okitani R."/>
            <person name="Kawakami T."/>
            <person name="Noguchi S."/>
            <person name="Itoh T."/>
            <person name="Shigeta K."/>
            <person name="Senba T."/>
            <person name="Matsumura K."/>
            <person name="Nakajima Y."/>
            <person name="Mizuno T."/>
            <person name="Morinaga M."/>
            <person name="Sasaki M."/>
            <person name="Togashi T."/>
            <person name="Oyama M."/>
            <person name="Hata H."/>
            <person name="Watanabe M."/>
            <person name="Komatsu T."/>
            <person name="Mizushima-Sugano J."/>
            <person name="Satoh T."/>
            <person name="Shirai Y."/>
            <person name="Takahashi Y."/>
            <person name="Nakagawa K."/>
            <person name="Okumura K."/>
            <person name="Nagase T."/>
            <person name="Nomura N."/>
            <person name="Kikuchi H."/>
            <person name="Masuho Y."/>
            <person name="Yamashita R."/>
            <person name="Nakai K."/>
            <person name="Yada T."/>
            <person name="Nakamura Y."/>
            <person name="Ohara O."/>
            <person name="Isogai T."/>
            <person name="Sugano S."/>
        </authorList>
    </citation>
    <scope>NUCLEOTIDE SEQUENCE [LARGE SCALE MRNA] (ISOFORM 2)</scope>
    <source>
        <tissue>Small intestine</tissue>
    </source>
</reference>
<reference key="5">
    <citation type="journal article" date="2006" name="Nature">
        <title>Analysis of the DNA sequence and duplication history of human chromosome 15.</title>
        <authorList>
            <person name="Zody M.C."/>
            <person name="Garber M."/>
            <person name="Sharpe T."/>
            <person name="Young S.K."/>
            <person name="Rowen L."/>
            <person name="O'Neill K."/>
            <person name="Whittaker C.A."/>
            <person name="Kamal M."/>
            <person name="Chang J.L."/>
            <person name="Cuomo C.A."/>
            <person name="Dewar K."/>
            <person name="FitzGerald M.G."/>
            <person name="Kodira C.D."/>
            <person name="Madan A."/>
            <person name="Qin S."/>
            <person name="Yang X."/>
            <person name="Abbasi N."/>
            <person name="Abouelleil A."/>
            <person name="Arachchi H.M."/>
            <person name="Baradarani L."/>
            <person name="Birditt B."/>
            <person name="Bloom S."/>
            <person name="Bloom T."/>
            <person name="Borowsky M.L."/>
            <person name="Burke J."/>
            <person name="Butler J."/>
            <person name="Cook A."/>
            <person name="DeArellano K."/>
            <person name="DeCaprio D."/>
            <person name="Dorris L. III"/>
            <person name="Dors M."/>
            <person name="Eichler E.E."/>
            <person name="Engels R."/>
            <person name="Fahey J."/>
            <person name="Fleetwood P."/>
            <person name="Friedman C."/>
            <person name="Gearin G."/>
            <person name="Hall J.L."/>
            <person name="Hensley G."/>
            <person name="Johnson E."/>
            <person name="Jones C."/>
            <person name="Kamat A."/>
            <person name="Kaur A."/>
            <person name="Locke D.P."/>
            <person name="Madan A."/>
            <person name="Munson G."/>
            <person name="Jaffe D.B."/>
            <person name="Lui A."/>
            <person name="Macdonald P."/>
            <person name="Mauceli E."/>
            <person name="Naylor J.W."/>
            <person name="Nesbitt R."/>
            <person name="Nicol R."/>
            <person name="O'Leary S.B."/>
            <person name="Ratcliffe A."/>
            <person name="Rounsley S."/>
            <person name="She X."/>
            <person name="Sneddon K.M.B."/>
            <person name="Stewart S."/>
            <person name="Sougnez C."/>
            <person name="Stone S.M."/>
            <person name="Topham K."/>
            <person name="Vincent D."/>
            <person name="Wang S."/>
            <person name="Zimmer A.R."/>
            <person name="Birren B.W."/>
            <person name="Hood L."/>
            <person name="Lander E.S."/>
            <person name="Nusbaum C."/>
        </authorList>
    </citation>
    <scope>NUCLEOTIDE SEQUENCE [LARGE SCALE GENOMIC DNA]</scope>
</reference>
<reference key="6">
    <citation type="journal article" date="2004" name="Genome Res.">
        <title>The status, quality, and expansion of the NIH full-length cDNA project: the Mammalian Gene Collection (MGC).</title>
        <authorList>
            <consortium name="The MGC Project Team"/>
        </authorList>
    </citation>
    <scope>NUCLEOTIDE SEQUENCE [LARGE SCALE MRNA] (ISOFORM 1)</scope>
    <source>
        <tissue>Lung</tissue>
    </source>
</reference>
<reference key="7">
    <citation type="journal article" date="2000" name="J. Cell Biol.">
        <title>PEX19 binds multiple peroxisomal membrane proteins, is predominantly cytoplasmic, and is required for peroxisome membrane synthesis.</title>
        <authorList>
            <person name="Sacksteder K.A."/>
            <person name="Jones J.M."/>
            <person name="South S.T."/>
            <person name="Li X."/>
            <person name="Liu Y."/>
            <person name="Gould S.J."/>
        </authorList>
    </citation>
    <scope>INTERACTION WITH PEX19</scope>
</reference>
<reference key="8">
    <citation type="journal article" date="2010" name="J. Cell Sci.">
        <title>PEX11 family members are membrane elongation factors that coordinate peroxisome proliferation and maintenance.</title>
        <authorList>
            <person name="Koch J."/>
            <person name="Pranjic K."/>
            <person name="Huber A."/>
            <person name="Ellinger A."/>
            <person name="Hartig A."/>
            <person name="Kragler F."/>
            <person name="Brocard C."/>
        </authorList>
    </citation>
    <scope>FUNCTION</scope>
    <scope>SUBUNIT</scope>
    <scope>INTERACTION WITH FIS1 AND PEX11G</scope>
    <scope>SUBCELLULAR LOCATION</scope>
</reference>
<evidence type="ECO:0000250" key="1">
    <source>
        <dbReference type="UniProtKB" id="O70597"/>
    </source>
</evidence>
<evidence type="ECO:0000255" key="2"/>
<evidence type="ECO:0000269" key="3">
    <source>
    </source>
</evidence>
<evidence type="ECO:0000269" key="4">
    <source>
    </source>
</evidence>
<evidence type="ECO:0000269" key="5">
    <source>
    </source>
</evidence>
<evidence type="ECO:0000269" key="6">
    <source>
    </source>
</evidence>
<evidence type="ECO:0000303" key="7">
    <source>
    </source>
</evidence>
<evidence type="ECO:0000305" key="8"/>
<comment type="function">
    <text evidence="1 4 6">May be involved in peroxisomal proliferation and may regulate peroxisomes division (PubMed:9792670). May mediate binding of coatomer proteins to the peroxisomal membrane (By similarity). Promotes membrane protrusion and elongation on the peroxisomal surface (PubMed:20826455).</text>
</comment>
<comment type="subunit">
    <text evidence="1 3 4">Homodimer (PubMed:20826455). Heterodimer with PEX11G (PubMed:20826455). Probably interacts with COPB2 and COPA (By similarity). Interacts with PEX19 (PubMed:10704444). Interacts with FIS1 (PubMed:20826455).</text>
</comment>
<comment type="subcellular location">
    <subcellularLocation>
        <location evidence="4 5 6">Peroxisome membrane</location>
        <topology evidence="5 6">Multi-pass membrane protein</topology>
    </subcellularLocation>
</comment>
<comment type="alternative products">
    <event type="alternative splicing"/>
    <isoform>
        <id>O75192-1</id>
        <name>1</name>
        <sequence type="displayed"/>
    </isoform>
    <isoform>
        <id>O75192-2</id>
        <name>2</name>
        <sequence type="described" ref="VSP_054753"/>
    </isoform>
</comment>
<comment type="PTM">
    <text>Seems not to be N-glycosylated.</text>
</comment>
<comment type="similarity">
    <text evidence="8">Belongs to the peroxin-11 family.</text>
</comment>
<name>PX11A_HUMAN</name>
<feature type="chain" id="PRO_0000105964" description="Peroxisomal membrane protein 11A">
    <location>
        <begin position="1"/>
        <end position="247"/>
    </location>
</feature>
<feature type="topological domain" description="Cytoplasmic" evidence="2">
    <location>
        <begin position="1"/>
        <end position="83"/>
    </location>
</feature>
<feature type="transmembrane region" description="Helical" evidence="2">
    <location>
        <begin position="84"/>
        <end position="105"/>
    </location>
</feature>
<feature type="topological domain" description="Lumenal" evidence="2">
    <location>
        <begin position="106"/>
        <end position="219"/>
    </location>
</feature>
<feature type="transmembrane region" description="Helical" evidence="2">
    <location>
        <begin position="220"/>
        <end position="239"/>
    </location>
</feature>
<feature type="topological domain" description="Cytoplasmic" evidence="2">
    <location>
        <begin position="240"/>
        <end position="247"/>
    </location>
</feature>
<feature type="region of interest" description="Required for homodimerization, interaction with PEX11G, and peroxisomal localization" evidence="4">
    <location>
        <begin position="220"/>
        <end position="239"/>
    </location>
</feature>
<feature type="splice variant" id="VSP_054753" description="In isoform 2." evidence="7">
    <original>WFRLGNVVHAIQATEQSIHATDLVPRLCLTLA</original>
    <variation>S</variation>
    <location>
        <begin position="58"/>
        <end position="89"/>
    </location>
</feature>
<feature type="mutagenesis site" description="No effect on peroxisomal location." evidence="5">
    <original>N</original>
    <variation>D</variation>
    <location>
        <position position="9"/>
    </location>
</feature>
<feature type="mutagenesis site" description="No effect on peroxisomal location." evidence="5">
    <original>KLK</original>
    <variation>SLS</variation>
    <location>
        <begin position="243"/>
        <end position="245"/>
    </location>
</feature>